<reference key="1">
    <citation type="submission" date="2002-04" db="EMBL/GenBank/DDBJ databases">
        <title>A new spermatogenesis-related gene.</title>
        <authorList>
            <person name="Wang L.F."/>
            <person name="Zhang X.D."/>
            <person name="Miao S.Y."/>
            <person name="Gou D."/>
            <person name="Wang Y."/>
        </authorList>
    </citation>
    <scope>NUCLEOTIDE SEQUENCE [LARGE SCALE MRNA]</scope>
    <source>
        <tissue>Testis</tissue>
    </source>
</reference>
<reference key="2">
    <citation type="journal article" date="2004" name="Nat. Genet.">
        <title>Complete sequencing and characterization of 21,243 full-length human cDNAs.</title>
        <authorList>
            <person name="Ota T."/>
            <person name="Suzuki Y."/>
            <person name="Nishikawa T."/>
            <person name="Otsuki T."/>
            <person name="Sugiyama T."/>
            <person name="Irie R."/>
            <person name="Wakamatsu A."/>
            <person name="Hayashi K."/>
            <person name="Sato H."/>
            <person name="Nagai K."/>
            <person name="Kimura K."/>
            <person name="Makita H."/>
            <person name="Sekine M."/>
            <person name="Obayashi M."/>
            <person name="Nishi T."/>
            <person name="Shibahara T."/>
            <person name="Tanaka T."/>
            <person name="Ishii S."/>
            <person name="Yamamoto J."/>
            <person name="Saito K."/>
            <person name="Kawai Y."/>
            <person name="Isono Y."/>
            <person name="Nakamura Y."/>
            <person name="Nagahari K."/>
            <person name="Murakami K."/>
            <person name="Yasuda T."/>
            <person name="Iwayanagi T."/>
            <person name="Wagatsuma M."/>
            <person name="Shiratori A."/>
            <person name="Sudo H."/>
            <person name="Hosoiri T."/>
            <person name="Kaku Y."/>
            <person name="Kodaira H."/>
            <person name="Kondo H."/>
            <person name="Sugawara M."/>
            <person name="Takahashi M."/>
            <person name="Kanda K."/>
            <person name="Yokoi T."/>
            <person name="Furuya T."/>
            <person name="Kikkawa E."/>
            <person name="Omura Y."/>
            <person name="Abe K."/>
            <person name="Kamihara K."/>
            <person name="Katsuta N."/>
            <person name="Sato K."/>
            <person name="Tanikawa M."/>
            <person name="Yamazaki M."/>
            <person name="Ninomiya K."/>
            <person name="Ishibashi T."/>
            <person name="Yamashita H."/>
            <person name="Murakawa K."/>
            <person name="Fujimori K."/>
            <person name="Tanai H."/>
            <person name="Kimata M."/>
            <person name="Watanabe M."/>
            <person name="Hiraoka S."/>
            <person name="Chiba Y."/>
            <person name="Ishida S."/>
            <person name="Ono Y."/>
            <person name="Takiguchi S."/>
            <person name="Watanabe S."/>
            <person name="Yosida M."/>
            <person name="Hotuta T."/>
            <person name="Kusano J."/>
            <person name="Kanehori K."/>
            <person name="Takahashi-Fujii A."/>
            <person name="Hara H."/>
            <person name="Tanase T.-O."/>
            <person name="Nomura Y."/>
            <person name="Togiya S."/>
            <person name="Komai F."/>
            <person name="Hara R."/>
            <person name="Takeuchi K."/>
            <person name="Arita M."/>
            <person name="Imose N."/>
            <person name="Musashino K."/>
            <person name="Yuuki H."/>
            <person name="Oshima A."/>
            <person name="Sasaki N."/>
            <person name="Aotsuka S."/>
            <person name="Yoshikawa Y."/>
            <person name="Matsunawa H."/>
            <person name="Ichihara T."/>
            <person name="Shiohata N."/>
            <person name="Sano S."/>
            <person name="Moriya S."/>
            <person name="Momiyama H."/>
            <person name="Satoh N."/>
            <person name="Takami S."/>
            <person name="Terashima Y."/>
            <person name="Suzuki O."/>
            <person name="Nakagawa S."/>
            <person name="Senoh A."/>
            <person name="Mizoguchi H."/>
            <person name="Goto Y."/>
            <person name="Shimizu F."/>
            <person name="Wakebe H."/>
            <person name="Hishigaki H."/>
            <person name="Watanabe T."/>
            <person name="Sugiyama A."/>
            <person name="Takemoto M."/>
            <person name="Kawakami B."/>
            <person name="Yamazaki M."/>
            <person name="Watanabe K."/>
            <person name="Kumagai A."/>
            <person name="Itakura S."/>
            <person name="Fukuzumi Y."/>
            <person name="Fujimori Y."/>
            <person name="Komiyama M."/>
            <person name="Tashiro H."/>
            <person name="Tanigami A."/>
            <person name="Fujiwara T."/>
            <person name="Ono T."/>
            <person name="Yamada K."/>
            <person name="Fujii Y."/>
            <person name="Ozaki K."/>
            <person name="Hirao M."/>
            <person name="Ohmori Y."/>
            <person name="Kawabata A."/>
            <person name="Hikiji T."/>
            <person name="Kobatake N."/>
            <person name="Inagaki H."/>
            <person name="Ikema Y."/>
            <person name="Okamoto S."/>
            <person name="Okitani R."/>
            <person name="Kawakami T."/>
            <person name="Noguchi S."/>
            <person name="Itoh T."/>
            <person name="Shigeta K."/>
            <person name="Senba T."/>
            <person name="Matsumura K."/>
            <person name="Nakajima Y."/>
            <person name="Mizuno T."/>
            <person name="Morinaga M."/>
            <person name="Sasaki M."/>
            <person name="Togashi T."/>
            <person name="Oyama M."/>
            <person name="Hata H."/>
            <person name="Watanabe M."/>
            <person name="Komatsu T."/>
            <person name="Mizushima-Sugano J."/>
            <person name="Satoh T."/>
            <person name="Shirai Y."/>
            <person name="Takahashi Y."/>
            <person name="Nakagawa K."/>
            <person name="Okumura K."/>
            <person name="Nagase T."/>
            <person name="Nomura N."/>
            <person name="Kikuchi H."/>
            <person name="Masuho Y."/>
            <person name="Yamashita R."/>
            <person name="Nakai K."/>
            <person name="Yada T."/>
            <person name="Nakamura Y."/>
            <person name="Ohara O."/>
            <person name="Isogai T."/>
            <person name="Sugano S."/>
        </authorList>
    </citation>
    <scope>NUCLEOTIDE SEQUENCE [LARGE SCALE MRNA]</scope>
    <source>
        <tissue>Brain</tissue>
        <tissue>Testis</tissue>
    </source>
</reference>
<reference key="3">
    <citation type="journal article" date="2006" name="Nature">
        <title>The DNA sequence, annotation and analysis of human chromosome 3.</title>
        <authorList>
            <person name="Muzny D.M."/>
            <person name="Scherer S.E."/>
            <person name="Kaul R."/>
            <person name="Wang J."/>
            <person name="Yu J."/>
            <person name="Sudbrak R."/>
            <person name="Buhay C.J."/>
            <person name="Chen R."/>
            <person name="Cree A."/>
            <person name="Ding Y."/>
            <person name="Dugan-Rocha S."/>
            <person name="Gill R."/>
            <person name="Gunaratne P."/>
            <person name="Harris R.A."/>
            <person name="Hawes A.C."/>
            <person name="Hernandez J."/>
            <person name="Hodgson A.V."/>
            <person name="Hume J."/>
            <person name="Jackson A."/>
            <person name="Khan Z.M."/>
            <person name="Kovar-Smith C."/>
            <person name="Lewis L.R."/>
            <person name="Lozado R.J."/>
            <person name="Metzker M.L."/>
            <person name="Milosavljevic A."/>
            <person name="Miner G.R."/>
            <person name="Morgan M.B."/>
            <person name="Nazareth L.V."/>
            <person name="Scott G."/>
            <person name="Sodergren E."/>
            <person name="Song X.-Z."/>
            <person name="Steffen D."/>
            <person name="Wei S."/>
            <person name="Wheeler D.A."/>
            <person name="Wright M.W."/>
            <person name="Worley K.C."/>
            <person name="Yuan Y."/>
            <person name="Zhang Z."/>
            <person name="Adams C.Q."/>
            <person name="Ansari-Lari M.A."/>
            <person name="Ayele M."/>
            <person name="Brown M.J."/>
            <person name="Chen G."/>
            <person name="Chen Z."/>
            <person name="Clendenning J."/>
            <person name="Clerc-Blankenburg K.P."/>
            <person name="Chen R."/>
            <person name="Chen Z."/>
            <person name="Davis C."/>
            <person name="Delgado O."/>
            <person name="Dinh H.H."/>
            <person name="Dong W."/>
            <person name="Draper H."/>
            <person name="Ernst S."/>
            <person name="Fu G."/>
            <person name="Gonzalez-Garay M.L."/>
            <person name="Garcia D.K."/>
            <person name="Gillett W."/>
            <person name="Gu J."/>
            <person name="Hao B."/>
            <person name="Haugen E."/>
            <person name="Havlak P."/>
            <person name="He X."/>
            <person name="Hennig S."/>
            <person name="Hu S."/>
            <person name="Huang W."/>
            <person name="Jackson L.R."/>
            <person name="Jacob L.S."/>
            <person name="Kelly S.H."/>
            <person name="Kube M."/>
            <person name="Levy R."/>
            <person name="Li Z."/>
            <person name="Liu B."/>
            <person name="Liu J."/>
            <person name="Liu W."/>
            <person name="Lu J."/>
            <person name="Maheshwari M."/>
            <person name="Nguyen B.-V."/>
            <person name="Okwuonu G.O."/>
            <person name="Palmeiri A."/>
            <person name="Pasternak S."/>
            <person name="Perez L.M."/>
            <person name="Phelps K.A."/>
            <person name="Plopper F.J."/>
            <person name="Qiang B."/>
            <person name="Raymond C."/>
            <person name="Rodriguez R."/>
            <person name="Saenphimmachak C."/>
            <person name="Santibanez J."/>
            <person name="Shen H."/>
            <person name="Shen Y."/>
            <person name="Subramanian S."/>
            <person name="Tabor P.E."/>
            <person name="Verduzco D."/>
            <person name="Waldron L."/>
            <person name="Wang J."/>
            <person name="Wang J."/>
            <person name="Wang Q."/>
            <person name="Williams G.A."/>
            <person name="Wong G.K.-S."/>
            <person name="Yao Z."/>
            <person name="Zhang J."/>
            <person name="Zhang X."/>
            <person name="Zhao G."/>
            <person name="Zhou J."/>
            <person name="Zhou Y."/>
            <person name="Nelson D."/>
            <person name="Lehrach H."/>
            <person name="Reinhardt R."/>
            <person name="Naylor S.L."/>
            <person name="Yang H."/>
            <person name="Olson M."/>
            <person name="Weinstock G."/>
            <person name="Gibbs R.A."/>
        </authorList>
    </citation>
    <scope>NUCLEOTIDE SEQUENCE [LARGE SCALE GENOMIC DNA]</scope>
</reference>
<reference key="4">
    <citation type="journal article" date="2004" name="Genome Res.">
        <title>The status, quality, and expansion of the NIH full-length cDNA project: the Mammalian Gene Collection (MGC).</title>
        <authorList>
            <consortium name="The MGC Project Team"/>
        </authorList>
    </citation>
    <scope>NUCLEOTIDE SEQUENCE [LARGE SCALE MRNA]</scope>
    <source>
        <tissue>Lung</tissue>
    </source>
</reference>
<reference key="5">
    <citation type="journal article" date="2011" name="EMBO J.">
        <title>Novel asymmetrically localizing components of human centrosomes identified by complementary proteomics methods.</title>
        <authorList>
            <person name="Jakobsen L."/>
            <person name="Vanselow K."/>
            <person name="Skogs M."/>
            <person name="Toyoda Y."/>
            <person name="Lundberg E."/>
            <person name="Poser I."/>
            <person name="Falkenby L.G."/>
            <person name="Bennetzen M."/>
            <person name="Westendorf J."/>
            <person name="Nigg E.A."/>
            <person name="Uhlen M."/>
            <person name="Hyman A.A."/>
            <person name="Andersen J.S."/>
        </authorList>
    </citation>
    <scope>IDENTIFICATION BY MASS SPECTROMETRY</scope>
    <scope>SUBCELLULAR LOCATION</scope>
</reference>
<reference key="6">
    <citation type="journal article" date="2013" name="Am. J. Hum. Genet.">
        <title>Morbid obesity resulting from inactivation of the ciliary protein CEP19 in humans and mice.</title>
        <authorList>
            <person name="Shalata A."/>
            <person name="Ramirez M.C."/>
            <person name="Desnick R.J."/>
            <person name="Priedigkeit N."/>
            <person name="Buettner C."/>
            <person name="Lindtner C."/>
            <person name="Mahroum M."/>
            <person name="Abdul-Ghani M."/>
            <person name="Dong F."/>
            <person name="Arar N."/>
            <person name="Camacho-Vanegas O."/>
            <person name="Zhang R."/>
            <person name="Camacho S.C."/>
            <person name="Chen Y."/>
            <person name="Ibdah M."/>
            <person name="DeFronzo R."/>
            <person name="Gillespie V."/>
            <person name="Kelley K."/>
            <person name="Dynlacht B.D."/>
            <person name="Kim S."/>
            <person name="Glucksman M.J."/>
            <person name="Borochowitz Z.U."/>
            <person name="Martignetti J.A."/>
        </authorList>
    </citation>
    <scope>INVOLVEMENT IN MOSPGF</scope>
    <scope>SUBCELLULAR LOCATION</scope>
</reference>
<reference key="7">
    <citation type="journal article" date="2017" name="Dev. Cell">
        <title>The CEP19-RABL2 GTPase complex binds IFT-B to initiate intraflagellar transport at the ciliary base.</title>
        <authorList>
            <person name="Kanie T."/>
            <person name="Abbott K.L."/>
            <person name="Mooney N.A."/>
            <person name="Plowey E.D."/>
            <person name="Demeter J."/>
            <person name="Jackson P.K."/>
        </authorList>
    </citation>
    <scope>FUNCTION</scope>
    <scope>INTERACTION WITH CEP43 AND RABL2B</scope>
    <scope>SUBCELLULAR LOCATION</scope>
    <scope>PHYLOGENETIC ANALYSIS</scope>
</reference>
<reference key="8">
    <citation type="journal article" date="2017" name="Mol. Biol. Cell">
        <title>RABL2 interacts with the intraflagellar transport-B complex and CEP19 and participates in ciliary assembly.</title>
        <authorList>
            <person name="Nishijima Y."/>
            <person name="Hagiya Y."/>
            <person name="Kubo T."/>
            <person name="Takei R."/>
            <person name="Katoh Y."/>
            <person name="Nakayama K."/>
        </authorList>
    </citation>
    <scope>FUNCTION</scope>
    <scope>INTERACTION WITH CEP43 AND RABL2B</scope>
    <scope>SUBCELLULAR LOCATION</scope>
</reference>
<reference key="9">
    <citation type="journal article" date="2017" name="Open Biol.">
        <title>CEP19 cooperates with FOP and CEP350 to drive early steps in the ciliogenesis programme.</title>
        <authorList>
            <person name="Mojarad B.A."/>
            <person name="Gupta G.D."/>
            <person name="Hasegan M."/>
            <person name="Goudiam O."/>
            <person name="Basto R."/>
            <person name="Gingras A.C."/>
            <person name="Pelletier L."/>
        </authorList>
    </citation>
    <scope>FUNCTION</scope>
    <scope>INTERACTION WITH CEP43 AND CEP350</scope>
    <scope>SUBCELLULAR LOCATION</scope>
</reference>
<keyword id="KW-0966">Cell projection</keyword>
<keyword id="KW-0969">Cilium</keyword>
<keyword id="KW-0970">Cilium biogenesis/degradation</keyword>
<keyword id="KW-0963">Cytoplasm</keyword>
<keyword id="KW-0206">Cytoskeleton</keyword>
<keyword id="KW-0550">Obesity</keyword>
<keyword id="KW-1267">Proteomics identification</keyword>
<keyword id="KW-1185">Reference proteome</keyword>
<feature type="chain" id="PRO_0000251960" description="Centrosomal protein of 19 kDa">
    <location>
        <begin position="1"/>
        <end position="163"/>
    </location>
</feature>
<organism>
    <name type="scientific">Homo sapiens</name>
    <name type="common">Human</name>
    <dbReference type="NCBI Taxonomy" id="9606"/>
    <lineage>
        <taxon>Eukaryota</taxon>
        <taxon>Metazoa</taxon>
        <taxon>Chordata</taxon>
        <taxon>Craniata</taxon>
        <taxon>Vertebrata</taxon>
        <taxon>Euteleostomi</taxon>
        <taxon>Mammalia</taxon>
        <taxon>Eutheria</taxon>
        <taxon>Euarchontoglires</taxon>
        <taxon>Primates</taxon>
        <taxon>Haplorrhini</taxon>
        <taxon>Catarrhini</taxon>
        <taxon>Hominidae</taxon>
        <taxon>Homo</taxon>
    </lineage>
</organism>
<comment type="function">
    <text evidence="3 4 5">Required for ciliation (PubMed:28428259, PubMed:28625565, PubMed:28659385). Recruits the RABL2B GTPase to the ciliary base to initiate ciliation. After specifically capturing the activated GTP-bound RABL2B, the CEP19-RABL2B complex binds intraflagellar transport (IFT) complex B from the large pool pre-docked at the base of the cilium and thus triggers its entry into the cilia (PubMed:28428259, PubMed:28625565). Involved in the early steps in cilia formation by recruiting the ciliary vesicles (CVs) to the distal end of the mother centriole where they fuse to initiate cilium assembly. Involved in microtubule (MT) anchoring to the centrosomes (PubMed:28659385).</text>
</comment>
<comment type="subunit">
    <text evidence="3 4 5">Interacts with CEP43; this interaction is required for its localization to the mother centriole (PubMed:28428259, PubMed:28625565, PubMed:28659385). Interacts (via residues 121-150) with RABL2B (PubMed:28428259, PubMed:28625565). Interacts (via C-terminus) with CEP350; this interaction is required for its localization to the mother centriole (PubMed:28659385).</text>
</comment>
<comment type="interaction">
    <interactant intactId="EBI-741885">
        <id>Q96LK0</id>
    </interactant>
    <interactant intactId="EBI-8787535">
        <id>P60006</id>
        <label>ANAPC15</label>
    </interactant>
    <organismsDiffer>false</organismsDiffer>
    <experiments>3</experiments>
</comment>
<comment type="interaction">
    <interactant intactId="EBI-741885">
        <id>Q96LK0</id>
    </interactant>
    <interactant intactId="EBI-10216552">
        <id>Q8IY42</id>
        <label>C4orf19</label>
    </interactant>
    <organismsDiffer>false</organismsDiffer>
    <experiments>3</experiments>
</comment>
<comment type="interaction">
    <interactant intactId="EBI-741885">
        <id>Q96LK0</id>
    </interactant>
    <interactant intactId="EBI-749920">
        <id>Q9P1Z2</id>
        <label>CALCOCO1</label>
    </interactant>
    <organismsDiffer>false</organismsDiffer>
    <experiments>6</experiments>
</comment>
<comment type="interaction">
    <interactant intactId="EBI-741885">
        <id>Q96LK0</id>
    </interactant>
    <interactant intactId="EBI-10171570">
        <id>Q68D86</id>
        <label>CCDC102B</label>
    </interactant>
    <organismsDiffer>false</organismsDiffer>
    <experiments>6</experiments>
</comment>
<comment type="interaction">
    <interactant intactId="EBI-741885">
        <id>Q96LK0</id>
    </interactant>
    <interactant intactId="EBI-711501">
        <id>Q9BWC9</id>
        <label>CCDC106</label>
    </interactant>
    <organismsDiffer>false</organismsDiffer>
    <experiments>3</experiments>
</comment>
<comment type="interaction">
    <interactant intactId="EBI-741885">
        <id>Q96LK0</id>
    </interactant>
    <interactant intactId="EBI-8466689">
        <id>Q96AQ1</id>
        <label>CCDC74A</label>
    </interactant>
    <organismsDiffer>false</organismsDiffer>
    <experiments>3</experiments>
</comment>
<comment type="interaction">
    <interactant intactId="EBI-741885">
        <id>Q96LK0</id>
    </interactant>
    <interactant intactId="EBI-2836538">
        <id>P51861</id>
        <label>CDR1</label>
    </interactant>
    <organismsDiffer>false</organismsDiffer>
    <experiments>3</experiments>
</comment>
<comment type="interaction">
    <interactant intactId="EBI-741885">
        <id>Q96LK0</id>
    </interactant>
    <interactant intactId="EBI-1266334">
        <id>O95684</id>
        <label>CEP43</label>
    </interactant>
    <organismsDiffer>false</organismsDiffer>
    <experiments>8</experiments>
</comment>
<comment type="interaction">
    <interactant intactId="EBI-741885">
        <id>Q96LK0</id>
    </interactant>
    <interactant intactId="EBI-1266347">
        <id>O95684-2</id>
        <label>CEP43</label>
    </interactant>
    <organismsDiffer>false</organismsDiffer>
    <experiments>7</experiments>
</comment>
<comment type="interaction">
    <interactant intactId="EBI-741885">
        <id>Q96LK0</id>
    </interactant>
    <interactant intactId="EBI-852194">
        <id>Q68CJ9</id>
        <label>CREB3L3</label>
    </interactant>
    <organismsDiffer>false</organismsDiffer>
    <experiments>3</experiments>
</comment>
<comment type="interaction">
    <interactant intactId="EBI-741885">
        <id>Q96LK0</id>
    </interactant>
    <interactant intactId="EBI-742054">
        <id>Q96D03</id>
        <label>DDIT4L</label>
    </interactant>
    <organismsDiffer>false</organismsDiffer>
    <experiments>3</experiments>
</comment>
<comment type="interaction">
    <interactant intactId="EBI-741885">
        <id>Q96LK0</id>
    </interactant>
    <interactant intactId="EBI-852291">
        <id>O60447</id>
        <label>EVI5</label>
    </interactant>
    <organismsDiffer>false</organismsDiffer>
    <experiments>3</experiments>
</comment>
<comment type="interaction">
    <interactant intactId="EBI-741885">
        <id>Q96LK0</id>
    </interactant>
    <interactant intactId="EBI-10253815">
        <id>Q6PIV2</id>
        <label>FOXR1</label>
    </interactant>
    <organismsDiffer>false</organismsDiffer>
    <experiments>3</experiments>
</comment>
<comment type="interaction">
    <interactant intactId="EBI-741885">
        <id>Q96LK0</id>
    </interactant>
    <interactant intactId="EBI-948296">
        <id>Q9UKD1</id>
        <label>GMEB2</label>
    </interactant>
    <organismsDiffer>false</organismsDiffer>
    <experiments>3</experiments>
</comment>
<comment type="interaction">
    <interactant intactId="EBI-741885">
        <id>Q96LK0</id>
    </interactant>
    <interactant intactId="EBI-641642">
        <id>Q9BVP2</id>
        <label>GNL3</label>
    </interactant>
    <organismsDiffer>false</organismsDiffer>
    <experiments>4</experiments>
</comment>
<comment type="interaction">
    <interactant intactId="EBI-741885">
        <id>Q96LK0</id>
    </interactant>
    <interactant intactId="EBI-739395">
        <id>Q16082</id>
        <label>HSPB2</label>
    </interactant>
    <organismsDiffer>false</organismsDiffer>
    <experiments>6</experiments>
</comment>
<comment type="interaction">
    <interactant intactId="EBI-741885">
        <id>Q96LK0</id>
    </interactant>
    <interactant intactId="EBI-10181113">
        <id>Q8N8K9</id>
        <label>KIAA1958</label>
    </interactant>
    <organismsDiffer>false</organismsDiffer>
    <experiments>3</experiments>
</comment>
<comment type="interaction">
    <interactant intactId="EBI-741885">
        <id>Q96LK0</id>
    </interactant>
    <interactant intactId="EBI-739657">
        <id>Q9BQD3</id>
        <label>KXD1</label>
    </interactant>
    <organismsDiffer>false</organismsDiffer>
    <experiments>7</experiments>
</comment>
<comment type="interaction">
    <interactant intactId="EBI-741885">
        <id>Q96LK0</id>
    </interactant>
    <interactant intactId="EBI-19761491">
        <id>Q8IV50-2</id>
        <label>LYSMD2</label>
    </interactant>
    <organismsDiffer>false</organismsDiffer>
    <experiments>3</experiments>
</comment>
<comment type="interaction">
    <interactant intactId="EBI-741885">
        <id>Q96LK0</id>
    </interactant>
    <interactant intactId="EBI-17490746">
        <id>A8MTQ0</id>
        <label>NOTO</label>
    </interactant>
    <organismsDiffer>false</organismsDiffer>
    <experiments>3</experiments>
</comment>
<comment type="interaction">
    <interactant intactId="EBI-741885">
        <id>Q96LK0</id>
    </interactant>
    <interactant intactId="EBI-1053912">
        <id>O95340</id>
        <label>PAPSS2</label>
    </interactant>
    <organismsDiffer>false</organismsDiffer>
    <experiments>6</experiments>
</comment>
<comment type="interaction">
    <interactant intactId="EBI-741885">
        <id>Q96LK0</id>
    </interactant>
    <interactant intactId="EBI-594849">
        <id>Q92968</id>
        <label>PEX13</label>
    </interactant>
    <organismsDiffer>false</organismsDiffer>
    <experiments>3</experiments>
</comment>
<comment type="interaction">
    <interactant intactId="EBI-741885">
        <id>Q96LK0</id>
    </interactant>
    <interactant intactId="EBI-14066006">
        <id>Q4G0R1</id>
        <label>PIBF1</label>
    </interactant>
    <organismsDiffer>false</organismsDiffer>
    <experiments>3</experiments>
</comment>
<comment type="interaction">
    <interactant intactId="EBI-741885">
        <id>Q96LK0</id>
    </interactant>
    <interactant intactId="EBI-79165">
        <id>Q9NRD5</id>
        <label>PICK1</label>
    </interactant>
    <organismsDiffer>false</organismsDiffer>
    <experiments>3</experiments>
</comment>
<comment type="interaction">
    <interactant intactId="EBI-741885">
        <id>Q96LK0</id>
    </interactant>
    <interactant intactId="EBI-79893">
        <id>Q92569</id>
        <label>PIK3R3</label>
    </interactant>
    <organismsDiffer>false</organismsDiffer>
    <experiments>4</experiments>
</comment>
<comment type="interaction">
    <interactant intactId="EBI-741885">
        <id>Q96LK0</id>
    </interactant>
    <interactant intactId="EBI-949945">
        <id>Q53GL0</id>
        <label>PLEKHO1</label>
    </interactant>
    <organismsDiffer>false</organismsDiffer>
    <experiments>3</experiments>
</comment>
<comment type="interaction">
    <interactant intactId="EBI-741885">
        <id>Q96LK0</id>
    </interactant>
    <interactant intactId="EBI-2116102">
        <id>Q96NZ9</id>
        <label>PRAP1</label>
    </interactant>
    <organismsDiffer>false</organismsDiffer>
    <experiments>3</experiments>
</comment>
<comment type="interaction">
    <interactant intactId="EBI-741885">
        <id>Q96LK0</id>
    </interactant>
    <interactant intactId="EBI-2805516">
        <id>P31321</id>
        <label>PRKAR1B</label>
    </interactant>
    <organismsDiffer>false</organismsDiffer>
    <experiments>5</experiments>
</comment>
<comment type="interaction">
    <interactant intactId="EBI-741885">
        <id>Q96LK0</id>
    </interactant>
    <interactant intactId="EBI-724478">
        <id>Q9H3S7</id>
        <label>PTPN23</label>
    </interactant>
    <organismsDiffer>false</organismsDiffer>
    <experiments>3</experiments>
</comment>
<comment type="interaction">
    <interactant intactId="EBI-741885">
        <id>Q96LK0</id>
    </interactant>
    <interactant intactId="EBI-4402837">
        <id>Q9UBK7-2</id>
        <label>RABL2A</label>
    </interactant>
    <organismsDiffer>false</organismsDiffer>
    <experiments>6</experiments>
</comment>
<comment type="interaction">
    <interactant intactId="EBI-741885">
        <id>Q96LK0</id>
    </interactant>
    <interactant intactId="EBI-12256104">
        <id>Q9UNT1-2</id>
        <label>RABL2B</label>
    </interactant>
    <organismsDiffer>false</organismsDiffer>
    <experiments>3</experiments>
</comment>
<comment type="interaction">
    <interactant intactId="EBI-741885">
        <id>Q96LK0</id>
    </interactant>
    <interactant intactId="EBI-307352">
        <id>Q04864</id>
        <label>REL</label>
    </interactant>
    <organismsDiffer>false</organismsDiffer>
    <experiments>3</experiments>
</comment>
<comment type="interaction">
    <interactant intactId="EBI-741885">
        <id>Q96LK0</id>
    </interactant>
    <interactant intactId="EBI-10829018">
        <id>Q04864-2</id>
        <label>REL</label>
    </interactant>
    <organismsDiffer>false</organismsDiffer>
    <experiments>3</experiments>
</comment>
<comment type="interaction">
    <interactant intactId="EBI-741885">
        <id>Q96LK0</id>
    </interactant>
    <interactant intactId="EBI-6508018">
        <id>Q8WZ75</id>
        <label>ROBO4</label>
    </interactant>
    <organismsDiffer>false</organismsDiffer>
    <experiments>3</experiments>
</comment>
<comment type="interaction">
    <interactant intactId="EBI-741885">
        <id>Q96LK0</id>
    </interactant>
    <interactant intactId="EBI-2880236">
        <id>Q9H4L4</id>
        <label>SENP3</label>
    </interactant>
    <organismsDiffer>false</organismsDiffer>
    <experiments>3</experiments>
</comment>
<comment type="interaction">
    <interactant intactId="EBI-741885">
        <id>Q96LK0</id>
    </interactant>
    <interactant intactId="EBI-748621">
        <id>Q9UJW9</id>
        <label>SERTAD3</label>
    </interactant>
    <organismsDiffer>false</organismsDiffer>
    <experiments>3</experiments>
</comment>
<comment type="interaction">
    <interactant intactId="EBI-741885">
        <id>Q96LK0</id>
    </interactant>
    <interactant intactId="EBI-7131783">
        <id>Q8N205</id>
        <label>SYNE4</label>
    </interactant>
    <organismsDiffer>false</organismsDiffer>
    <experiments>3</experiments>
</comment>
<comment type="interaction">
    <interactant intactId="EBI-741885">
        <id>Q96LK0</id>
    </interactant>
    <interactant intactId="EBI-12099160">
        <id>Q8N205-2</id>
        <label>SYNE4</label>
    </interactant>
    <organismsDiffer>false</organismsDiffer>
    <experiments>3</experiments>
</comment>
<comment type="interaction">
    <interactant intactId="EBI-741885">
        <id>Q96LK0</id>
    </interactant>
    <interactant intactId="EBI-746692">
        <id>P19237</id>
        <label>TNNI1</label>
    </interactant>
    <organismsDiffer>false</organismsDiffer>
    <experiments>3</experiments>
</comment>
<comment type="interaction">
    <interactant intactId="EBI-741885">
        <id>Q96LK0</id>
    </interactant>
    <interactant intactId="EBI-1756205">
        <id>Q9BWF2</id>
        <label>TRAIP</label>
    </interactant>
    <organismsDiffer>false</organismsDiffer>
    <experiments>3</experiments>
</comment>
<comment type="interaction">
    <interactant intactId="EBI-741885">
        <id>Q96LK0</id>
    </interactant>
    <interactant intactId="EBI-947459">
        <id>Q9H2G4</id>
        <label>TSPYL2</label>
    </interactant>
    <organismsDiffer>false</organismsDiffer>
    <experiments>3</experiments>
</comment>
<comment type="interaction">
    <interactant intactId="EBI-741885">
        <id>Q96LK0</id>
    </interactant>
    <interactant intactId="EBI-11343401">
        <id>Q9NYZ1</id>
        <label>TVP23B</label>
    </interactant>
    <organismsDiffer>false</organismsDiffer>
    <experiments>3</experiments>
</comment>
<comment type="interaction">
    <interactant intactId="EBI-741885">
        <id>Q96LK0</id>
    </interactant>
    <interactant intactId="EBI-6116822">
        <id>Q8N3L3</id>
        <label>TXLNB</label>
    </interactant>
    <organismsDiffer>false</organismsDiffer>
    <experiments>3</experiments>
</comment>
<comment type="interaction">
    <interactant intactId="EBI-741885">
        <id>Q96LK0</id>
    </interactant>
    <interactant intactId="EBI-355164">
        <id>P55072</id>
        <label>VCP</label>
    </interactant>
    <organismsDiffer>false</organismsDiffer>
    <experiments>6</experiments>
</comment>
<comment type="interaction">
    <interactant intactId="EBI-741885">
        <id>Q96LK0</id>
    </interactant>
    <interactant intactId="EBI-2799833">
        <id>Q8N1B4</id>
        <label>VPS52</label>
    </interactant>
    <organismsDiffer>false</organismsDiffer>
    <experiments>3</experiments>
</comment>
<comment type="interaction">
    <interactant intactId="EBI-741885">
        <id>Q96LK0</id>
    </interactant>
    <interactant intactId="EBI-12017160">
        <id>Q96DT7-3</id>
        <label>ZBTB10</label>
    </interactant>
    <organismsDiffer>false</organismsDiffer>
    <experiments>3</experiments>
</comment>
<comment type="interaction">
    <interactant intactId="EBI-741885">
        <id>Q96LK0</id>
    </interactant>
    <interactant intactId="EBI-10176632">
        <id>O43829</id>
        <label>ZBTB14</label>
    </interactant>
    <organismsDiffer>false</organismsDiffer>
    <experiments>6</experiments>
</comment>
<comment type="interaction">
    <interactant intactId="EBI-741885">
        <id>Q96LK0</id>
    </interactant>
    <interactant intactId="EBI-2555749">
        <id>Q6P2D0</id>
        <label>ZFP1</label>
    </interactant>
    <organismsDiffer>false</organismsDiffer>
    <experiments>3</experiments>
</comment>
<comment type="interaction">
    <interactant intactId="EBI-741885">
        <id>Q96LK0</id>
    </interactant>
    <interactant intactId="EBI-3923307">
        <id>Q8TAQ5</id>
        <label>ZNF420</label>
    </interactant>
    <organismsDiffer>false</organismsDiffer>
    <experiments>3</experiments>
</comment>
<comment type="interaction">
    <interactant intactId="EBI-741885">
        <id>Q96LK0</id>
    </interactant>
    <interactant intactId="EBI-11962468">
        <id>Q7Z4V0</id>
        <label>ZNF438</label>
    </interactant>
    <organismsDiffer>false</organismsDiffer>
    <experiments>3</experiments>
</comment>
<comment type="interaction">
    <interactant intactId="EBI-741885">
        <id>Q96LK0</id>
    </interactant>
    <interactant intactId="EBI-13335465">
        <id>Q6ZT36</id>
    </interactant>
    <organismsDiffer>false</organismsDiffer>
    <experiments>5</experiments>
</comment>
<comment type="subcellular location">
    <subcellularLocation>
        <location evidence="1 3 4 5">Cytoplasm</location>
        <location evidence="1 3 4 5">Cytoskeleton</location>
        <location evidence="1 3 4 5">Microtubule organizing center</location>
        <location evidence="1 3 4 5">Centrosome</location>
        <location evidence="1 3 4 5">Centriole</location>
    </subcellularLocation>
    <subcellularLocation>
        <location evidence="1">Cytoplasm</location>
        <location evidence="1">Cytoskeleton</location>
        <location evidence="1">Spindle pole</location>
    </subcellularLocation>
    <subcellularLocation>
        <location evidence="2 3 4 5">Cytoplasm</location>
        <location evidence="2 3 4 5">Cytoskeleton</location>
        <location evidence="2 3 4 5">Cilium basal body</location>
    </subcellularLocation>
    <text evidence="1 4">Associates with the mother centriole in early interphase. Localizes to spindle poles during mitosis, and to distinct foci oriented towards the midbody at telophase (PubMed:21399614). Localizes slightly apical to the subdistal appendage on the mother centriole, but below the distal appendage (PubMed:28625565, PubMed:28659385).</text>
</comment>
<comment type="disease" evidence="2">
    <disease id="DI-04042">
        <name>Morbid obesity and spermatogenic failure</name>
        <acronym>MOSPGF</acronym>
        <description>An autosomal recessive morbid obesity syndrome characterized by hypertension, fatty liver disease, insulin resistance, and decreased sperm counts. Variable clinical manifestations are early coronary artery disease with myocardial infarction before 45 years of age, type II diabetes mellitus, and intellectual disability. Morbid obese individuals are defined as having a BMI greater than 40.</description>
        <dbReference type="MIM" id="615703"/>
    </disease>
    <text>The disease is caused by variants affecting the gene represented in this entry.</text>
</comment>
<comment type="similarity">
    <text evidence="6">Belongs to the CEP19 family.</text>
</comment>
<comment type="caution">
    <text evidence="3 5">The region that interacts with CEP43 is conflicting: According to a report, interacts via N-terminus (PubMed:28428259). According to another report, interacts via C-terminus (PubMed:28659385).</text>
</comment>
<comment type="sequence caution" evidence="6">
    <conflict type="erroneous initiation">
        <sequence resource="EMBL-CDS" id="AAM47487"/>
    </conflict>
    <text>Extended N-terminus.</text>
</comment>
<comment type="sequence caution" evidence="6">
    <conflict type="erroneous initiation">
        <sequence resource="EMBL-CDS" id="BAB71691"/>
    </conflict>
    <text>Extended N-terminus.</text>
</comment>
<dbReference type="EMBL" id="AY099509">
    <property type="protein sequence ID" value="AAM47487.1"/>
    <property type="status" value="ALT_INIT"/>
    <property type="molecule type" value="mRNA"/>
</dbReference>
<dbReference type="EMBL" id="AK058155">
    <property type="protein sequence ID" value="BAB71691.1"/>
    <property type="status" value="ALT_INIT"/>
    <property type="molecule type" value="mRNA"/>
</dbReference>
<dbReference type="EMBL" id="AK314070">
    <property type="protein sequence ID" value="BAG36771.1"/>
    <property type="molecule type" value="mRNA"/>
</dbReference>
<dbReference type="EMBL" id="AC055725">
    <property type="status" value="NOT_ANNOTATED_CDS"/>
    <property type="molecule type" value="Genomic_DNA"/>
</dbReference>
<dbReference type="EMBL" id="BC007827">
    <property type="protein sequence ID" value="AAH07827.1"/>
    <property type="molecule type" value="mRNA"/>
</dbReference>
<dbReference type="CCDS" id="CCDS43193.3"/>
<dbReference type="RefSeq" id="NP_001366398.1">
    <property type="nucleotide sequence ID" value="NM_001379469.1"/>
</dbReference>
<dbReference type="RefSeq" id="NP_001366399.1">
    <property type="nucleotide sequence ID" value="NM_001379470.1"/>
</dbReference>
<dbReference type="RefSeq" id="NP_116287.3">
    <property type="nucleotide sequence ID" value="NM_032898.5"/>
</dbReference>
<dbReference type="RefSeq" id="XP_005269427.1">
    <property type="nucleotide sequence ID" value="XM_005269370.4"/>
</dbReference>
<dbReference type="RefSeq" id="XP_011511548.1">
    <property type="nucleotide sequence ID" value="XM_011513246.2"/>
</dbReference>
<dbReference type="BioGRID" id="124410">
    <property type="interactions" value="158"/>
</dbReference>
<dbReference type="CORUM" id="Q96LK0"/>
<dbReference type="FunCoup" id="Q96LK0">
    <property type="interactions" value="282"/>
</dbReference>
<dbReference type="IntAct" id="Q96LK0">
    <property type="interactions" value="155"/>
</dbReference>
<dbReference type="STRING" id="9606.ENSP00000387209"/>
<dbReference type="MoonDB" id="Q96LK0">
    <property type="type" value="Predicted"/>
</dbReference>
<dbReference type="GlyGen" id="Q96LK0">
    <property type="glycosylation" value="1 site, 1 O-linked glycan (1 site)"/>
</dbReference>
<dbReference type="PhosphoSitePlus" id="Q96LK0"/>
<dbReference type="BioMuta" id="CEP19"/>
<dbReference type="DMDM" id="115503728"/>
<dbReference type="jPOST" id="Q96LK0"/>
<dbReference type="MassIVE" id="Q96LK0"/>
<dbReference type="PaxDb" id="9606-ENSP00000387209"/>
<dbReference type="PeptideAtlas" id="Q96LK0"/>
<dbReference type="ProteomicsDB" id="77216"/>
<dbReference type="Antibodypedia" id="33949">
    <property type="antibodies" value="68 antibodies from 19 providers"/>
</dbReference>
<dbReference type="DNASU" id="84984"/>
<dbReference type="Ensembl" id="ENST00000409690.5">
    <property type="protein sequence ID" value="ENSP00000387209.4"/>
    <property type="gene ID" value="ENSG00000174007.9"/>
</dbReference>
<dbReference type="GeneID" id="84984"/>
<dbReference type="KEGG" id="hsa:84984"/>
<dbReference type="MANE-Select" id="ENST00000409690.5">
    <property type="protein sequence ID" value="ENSP00000387209.4"/>
    <property type="RefSeq nucleotide sequence ID" value="NM_032898.5"/>
    <property type="RefSeq protein sequence ID" value="NP_116287.3"/>
</dbReference>
<dbReference type="UCSC" id="uc011btw.3">
    <property type="organism name" value="human"/>
</dbReference>
<dbReference type="AGR" id="HGNC:28209"/>
<dbReference type="CTD" id="84984"/>
<dbReference type="DisGeNET" id="84984"/>
<dbReference type="GeneCards" id="CEP19"/>
<dbReference type="HGNC" id="HGNC:28209">
    <property type="gene designation" value="CEP19"/>
</dbReference>
<dbReference type="HPA" id="ENSG00000174007">
    <property type="expression patterns" value="Low tissue specificity"/>
</dbReference>
<dbReference type="MalaCards" id="CEP19"/>
<dbReference type="MIM" id="615586">
    <property type="type" value="gene"/>
</dbReference>
<dbReference type="MIM" id="615703">
    <property type="type" value="phenotype"/>
</dbReference>
<dbReference type="neXtProt" id="NX_Q96LK0"/>
<dbReference type="OpenTargets" id="ENSG00000174007"/>
<dbReference type="Orphanet" id="110">
    <property type="disease" value="Bardet-Biedl syndrome"/>
</dbReference>
<dbReference type="Orphanet" id="397615">
    <property type="disease" value="Obesity due to CEP19 deficiency"/>
</dbReference>
<dbReference type="PharmGKB" id="PA142672395"/>
<dbReference type="VEuPathDB" id="HostDB:ENSG00000174007"/>
<dbReference type="eggNOG" id="ENOG502RZP1">
    <property type="taxonomic scope" value="Eukaryota"/>
</dbReference>
<dbReference type="GeneTree" id="ENSGT00390000016356"/>
<dbReference type="HOGENOM" id="CLU_113348_0_0_1"/>
<dbReference type="InParanoid" id="Q96LK0"/>
<dbReference type="OMA" id="AKKCGIQ"/>
<dbReference type="OrthoDB" id="2163581at2759"/>
<dbReference type="PAN-GO" id="Q96LK0">
    <property type="GO annotations" value="6 GO annotations based on evolutionary models"/>
</dbReference>
<dbReference type="PhylomeDB" id="Q96LK0"/>
<dbReference type="TreeFam" id="TF328425"/>
<dbReference type="PathwayCommons" id="Q96LK0"/>
<dbReference type="SignaLink" id="Q96LK0"/>
<dbReference type="BioGRID-ORCS" id="84984">
    <property type="hits" value="11 hits in 1145 CRISPR screens"/>
</dbReference>
<dbReference type="CD-CODE" id="8C2F96ED">
    <property type="entry name" value="Centrosome"/>
</dbReference>
<dbReference type="GenomeRNAi" id="84984"/>
<dbReference type="Pharos" id="Q96LK0">
    <property type="development level" value="Tbio"/>
</dbReference>
<dbReference type="PRO" id="PR:Q96LK0"/>
<dbReference type="Proteomes" id="UP000005640">
    <property type="component" value="Chromosome 3"/>
</dbReference>
<dbReference type="RNAct" id="Q96LK0">
    <property type="molecule type" value="protein"/>
</dbReference>
<dbReference type="Bgee" id="ENSG00000174007">
    <property type="expression patterns" value="Expressed in male germ line stem cell (sensu Vertebrata) in testis and 152 other cell types or tissues"/>
</dbReference>
<dbReference type="ExpressionAtlas" id="Q96LK0">
    <property type="expression patterns" value="baseline and differential"/>
</dbReference>
<dbReference type="GO" id="GO:0005814">
    <property type="term" value="C:centriole"/>
    <property type="evidence" value="ECO:0000314"/>
    <property type="project" value="UniProtKB"/>
</dbReference>
<dbReference type="GO" id="GO:0005813">
    <property type="term" value="C:centrosome"/>
    <property type="evidence" value="ECO:0000314"/>
    <property type="project" value="HPA"/>
</dbReference>
<dbReference type="GO" id="GO:0036064">
    <property type="term" value="C:ciliary basal body"/>
    <property type="evidence" value="ECO:0000314"/>
    <property type="project" value="UniProtKB"/>
</dbReference>
<dbReference type="GO" id="GO:0005929">
    <property type="term" value="C:cilium"/>
    <property type="evidence" value="ECO:0000314"/>
    <property type="project" value="UniProtKB"/>
</dbReference>
<dbReference type="GO" id="GO:0005829">
    <property type="term" value="C:cytosol"/>
    <property type="evidence" value="ECO:0000314"/>
    <property type="project" value="HPA"/>
</dbReference>
<dbReference type="GO" id="GO:0005654">
    <property type="term" value="C:nucleoplasm"/>
    <property type="evidence" value="ECO:0000314"/>
    <property type="project" value="HPA"/>
</dbReference>
<dbReference type="GO" id="GO:0000922">
    <property type="term" value="C:spindle pole"/>
    <property type="evidence" value="ECO:0000314"/>
    <property type="project" value="UniProtKB"/>
</dbReference>
<dbReference type="GO" id="GO:0060271">
    <property type="term" value="P:cilium assembly"/>
    <property type="evidence" value="ECO:0000315"/>
    <property type="project" value="UniProtKB"/>
</dbReference>
<dbReference type="GO" id="GO:0034454">
    <property type="term" value="P:microtubule anchoring at centrosome"/>
    <property type="evidence" value="ECO:0000315"/>
    <property type="project" value="UniProtKB"/>
</dbReference>
<dbReference type="GO" id="GO:0097712">
    <property type="term" value="P:vesicle targeting, trans-Golgi to periciliary membrane compartment"/>
    <property type="evidence" value="ECO:0000315"/>
    <property type="project" value="UniProtKB"/>
</dbReference>
<dbReference type="InterPro" id="IPR029412">
    <property type="entry name" value="CEP19"/>
</dbReference>
<dbReference type="PANTHER" id="PTHR31539:SF1">
    <property type="entry name" value="CENTROSOMAL PROTEIN OF 19 KDA"/>
    <property type="match status" value="1"/>
</dbReference>
<dbReference type="PANTHER" id="PTHR31539">
    <property type="entry name" value="CENTROSOMAL PROTEIN OF 19K CEP19"/>
    <property type="match status" value="1"/>
</dbReference>
<dbReference type="Pfam" id="PF14933">
    <property type="entry name" value="CEP19"/>
    <property type="match status" value="1"/>
</dbReference>
<name>CEP19_HUMAN</name>
<protein>
    <recommendedName>
        <fullName>Centrosomal protein of 19 kDa</fullName>
        <shortName>Cep19</shortName>
    </recommendedName>
</protein>
<sequence>MMCTAKKCGIRFQPPAIILIYESEIKGKIRQRIMPVRNFSKFSDCTRAAEQLKNNPRHKSYLEQVSLRQLEKLFSFLRGYLSGQSLAETMEQIQRETTIDPEEDLNKLDDKELAKRKSIMDELFEKNQKKKDDPNFVYDIEVEFPQDDQLQSCGWDTESADEF</sequence>
<gene>
    <name type="primary">CEP19</name>
    <name type="synonym">C3orf34</name>
    <name type="ORF">HSD5</name>
</gene>
<evidence type="ECO:0000269" key="1">
    <source>
    </source>
</evidence>
<evidence type="ECO:0000269" key="2">
    <source>
    </source>
</evidence>
<evidence type="ECO:0000269" key="3">
    <source>
    </source>
</evidence>
<evidence type="ECO:0000269" key="4">
    <source>
    </source>
</evidence>
<evidence type="ECO:0000269" key="5">
    <source>
    </source>
</evidence>
<evidence type="ECO:0000305" key="6"/>
<proteinExistence type="evidence at protein level"/>
<accession>Q96LK0</accession>
<accession>B2RA74</accession>
<accession>Q96I48</accession>